<feature type="chain" id="PRO_0000335604" description="Acetylglutamate kinase">
    <location>
        <begin position="1"/>
        <end position="284"/>
    </location>
</feature>
<feature type="binding site" evidence="1">
    <location>
        <begin position="66"/>
        <end position="67"/>
    </location>
    <ligand>
        <name>substrate</name>
    </ligand>
</feature>
<feature type="binding site" evidence="1">
    <location>
        <position position="88"/>
    </location>
    <ligand>
        <name>substrate</name>
    </ligand>
</feature>
<feature type="binding site" evidence="1">
    <location>
        <position position="179"/>
    </location>
    <ligand>
        <name>substrate</name>
    </ligand>
</feature>
<feature type="site" description="Transition state stabilizer" evidence="1">
    <location>
        <position position="31"/>
    </location>
</feature>
<feature type="site" description="Transition state stabilizer" evidence="1">
    <location>
        <position position="242"/>
    </location>
</feature>
<reference key="1">
    <citation type="journal article" date="2008" name="PLoS ONE">
        <title>Genome biology of Actinobacillus pleuropneumoniae JL03, an isolate of serotype 3 prevalent in China.</title>
        <authorList>
            <person name="Xu Z."/>
            <person name="Zhou Y."/>
            <person name="Li L."/>
            <person name="Zhou R."/>
            <person name="Xiao S."/>
            <person name="Wan Y."/>
            <person name="Zhang S."/>
            <person name="Wang K."/>
            <person name="Li W."/>
            <person name="Li L."/>
            <person name="Jin H."/>
            <person name="Kang M."/>
            <person name="Dalai B."/>
            <person name="Li T."/>
            <person name="Liu L."/>
            <person name="Cheng Y."/>
            <person name="Zhang L."/>
            <person name="Xu T."/>
            <person name="Zheng H."/>
            <person name="Pu S."/>
            <person name="Wang B."/>
            <person name="Gu W."/>
            <person name="Zhang X.L."/>
            <person name="Zhu G.-F."/>
            <person name="Wang S."/>
            <person name="Zhao G.-P."/>
            <person name="Chen H."/>
        </authorList>
    </citation>
    <scope>NUCLEOTIDE SEQUENCE [LARGE SCALE GENOMIC DNA]</scope>
    <source>
        <strain>JL03</strain>
    </source>
</reference>
<gene>
    <name evidence="1" type="primary">argB</name>
    <name type="ordered locus">APJL_0248</name>
</gene>
<organism>
    <name type="scientific">Actinobacillus pleuropneumoniae serotype 3 (strain JL03)</name>
    <dbReference type="NCBI Taxonomy" id="434271"/>
    <lineage>
        <taxon>Bacteria</taxon>
        <taxon>Pseudomonadati</taxon>
        <taxon>Pseudomonadota</taxon>
        <taxon>Gammaproteobacteria</taxon>
        <taxon>Pasteurellales</taxon>
        <taxon>Pasteurellaceae</taxon>
        <taxon>Actinobacillus</taxon>
    </lineage>
</organism>
<accession>B0BSQ0</accession>
<sequence length="284" mass="30305">MLQNEVENFTNLLEQATVYLAPYQEKIIVVKYGGNAMINEDLKKLVMQDILLLNQLGVKVVLVHGGGPEISQGVKLLGKEPQFINGLRVTDQDTINVVLQMLAGKVNKSLVALLKGKGVGLCGIDANMLQCEKLQAEVDYGFVGEIVKVNTQLLELALSANLIPVISTVGVDDQGVAYNINADTVASEIAMALGAAKLVSMTDIAGLLRDRFDESTLIPEVEVSEVQGLIDQGIIAGGMIPKIACCTDFINAGGIEANIIDGRVPHAILVSLFGGKNGTLFYKK</sequence>
<protein>
    <recommendedName>
        <fullName evidence="1">Acetylglutamate kinase</fullName>
        <ecNumber evidence="1">2.7.2.8</ecNumber>
    </recommendedName>
    <alternativeName>
        <fullName evidence="1">N-acetyl-L-glutamate 5-phosphotransferase</fullName>
    </alternativeName>
    <alternativeName>
        <fullName evidence="1">NAG kinase</fullName>
        <shortName evidence="1">NAGK</shortName>
    </alternativeName>
</protein>
<evidence type="ECO:0000255" key="1">
    <source>
        <dbReference type="HAMAP-Rule" id="MF_00082"/>
    </source>
</evidence>
<comment type="function">
    <text evidence="1">Catalyzes the ATP-dependent phosphorylation of N-acetyl-L-glutamate.</text>
</comment>
<comment type="catalytic activity">
    <reaction evidence="1">
        <text>N-acetyl-L-glutamate + ATP = N-acetyl-L-glutamyl 5-phosphate + ADP</text>
        <dbReference type="Rhea" id="RHEA:14629"/>
        <dbReference type="ChEBI" id="CHEBI:30616"/>
        <dbReference type="ChEBI" id="CHEBI:44337"/>
        <dbReference type="ChEBI" id="CHEBI:57936"/>
        <dbReference type="ChEBI" id="CHEBI:456216"/>
        <dbReference type="EC" id="2.7.2.8"/>
    </reaction>
</comment>
<comment type="pathway">
    <text evidence="1">Amino-acid biosynthesis; L-arginine biosynthesis; N(2)-acetyl-L-ornithine from L-glutamate: step 2/4.</text>
</comment>
<comment type="subcellular location">
    <subcellularLocation>
        <location evidence="1">Cytoplasm</location>
    </subcellularLocation>
</comment>
<comment type="similarity">
    <text evidence="1">Belongs to the acetylglutamate kinase family. ArgB subfamily.</text>
</comment>
<keyword id="KW-0028">Amino-acid biosynthesis</keyword>
<keyword id="KW-0055">Arginine biosynthesis</keyword>
<keyword id="KW-0067">ATP-binding</keyword>
<keyword id="KW-0963">Cytoplasm</keyword>
<keyword id="KW-0418">Kinase</keyword>
<keyword id="KW-0547">Nucleotide-binding</keyword>
<keyword id="KW-0808">Transferase</keyword>
<proteinExistence type="inferred from homology"/>
<name>ARGB_ACTPJ</name>
<dbReference type="EC" id="2.7.2.8" evidence="1"/>
<dbReference type="EMBL" id="CP000687">
    <property type="protein sequence ID" value="ABY68852.1"/>
    <property type="molecule type" value="Genomic_DNA"/>
</dbReference>
<dbReference type="RefSeq" id="WP_012262749.1">
    <property type="nucleotide sequence ID" value="NC_010278.1"/>
</dbReference>
<dbReference type="SMR" id="B0BSQ0"/>
<dbReference type="KEGG" id="apj:APJL_0248"/>
<dbReference type="HOGENOM" id="CLU_053680_0_0_6"/>
<dbReference type="UniPathway" id="UPA00068">
    <property type="reaction ID" value="UER00107"/>
</dbReference>
<dbReference type="Proteomes" id="UP000008547">
    <property type="component" value="Chromosome"/>
</dbReference>
<dbReference type="GO" id="GO:0005737">
    <property type="term" value="C:cytoplasm"/>
    <property type="evidence" value="ECO:0007669"/>
    <property type="project" value="UniProtKB-SubCell"/>
</dbReference>
<dbReference type="GO" id="GO:0003991">
    <property type="term" value="F:acetylglutamate kinase activity"/>
    <property type="evidence" value="ECO:0007669"/>
    <property type="project" value="UniProtKB-UniRule"/>
</dbReference>
<dbReference type="GO" id="GO:0005524">
    <property type="term" value="F:ATP binding"/>
    <property type="evidence" value="ECO:0007669"/>
    <property type="project" value="UniProtKB-UniRule"/>
</dbReference>
<dbReference type="GO" id="GO:0042450">
    <property type="term" value="P:arginine biosynthetic process via ornithine"/>
    <property type="evidence" value="ECO:0007669"/>
    <property type="project" value="UniProtKB-UniRule"/>
</dbReference>
<dbReference type="GO" id="GO:0006526">
    <property type="term" value="P:L-arginine biosynthetic process"/>
    <property type="evidence" value="ECO:0007669"/>
    <property type="project" value="UniProtKB-UniPathway"/>
</dbReference>
<dbReference type="CDD" id="cd04250">
    <property type="entry name" value="AAK_NAGK-C"/>
    <property type="match status" value="1"/>
</dbReference>
<dbReference type="FunFam" id="3.40.1160.10:FF:000004">
    <property type="entry name" value="Acetylglutamate kinase"/>
    <property type="match status" value="1"/>
</dbReference>
<dbReference type="Gene3D" id="3.40.1160.10">
    <property type="entry name" value="Acetylglutamate kinase-like"/>
    <property type="match status" value="1"/>
</dbReference>
<dbReference type="HAMAP" id="MF_00082">
    <property type="entry name" value="ArgB"/>
    <property type="match status" value="1"/>
</dbReference>
<dbReference type="InterPro" id="IPR036393">
    <property type="entry name" value="AceGlu_kinase-like_sf"/>
</dbReference>
<dbReference type="InterPro" id="IPR004662">
    <property type="entry name" value="AcgluKinase_fam"/>
</dbReference>
<dbReference type="InterPro" id="IPR037528">
    <property type="entry name" value="ArgB"/>
</dbReference>
<dbReference type="InterPro" id="IPR001048">
    <property type="entry name" value="Asp/Glu/Uridylate_kinase"/>
</dbReference>
<dbReference type="InterPro" id="IPR001057">
    <property type="entry name" value="Glu/AcGlu_kinase"/>
</dbReference>
<dbReference type="InterPro" id="IPR041727">
    <property type="entry name" value="NAGK-C"/>
</dbReference>
<dbReference type="NCBIfam" id="TIGR00761">
    <property type="entry name" value="argB"/>
    <property type="match status" value="1"/>
</dbReference>
<dbReference type="PANTHER" id="PTHR23342">
    <property type="entry name" value="N-ACETYLGLUTAMATE SYNTHASE"/>
    <property type="match status" value="1"/>
</dbReference>
<dbReference type="PANTHER" id="PTHR23342:SF0">
    <property type="entry name" value="N-ACETYLGLUTAMATE SYNTHASE, MITOCHONDRIAL"/>
    <property type="match status" value="1"/>
</dbReference>
<dbReference type="Pfam" id="PF00696">
    <property type="entry name" value="AA_kinase"/>
    <property type="match status" value="1"/>
</dbReference>
<dbReference type="PIRSF" id="PIRSF000728">
    <property type="entry name" value="NAGK"/>
    <property type="match status" value="1"/>
</dbReference>
<dbReference type="PRINTS" id="PR00474">
    <property type="entry name" value="GLU5KINASE"/>
</dbReference>
<dbReference type="SUPFAM" id="SSF53633">
    <property type="entry name" value="Carbamate kinase-like"/>
    <property type="match status" value="1"/>
</dbReference>